<evidence type="ECO:0000255" key="1">
    <source>
        <dbReference type="HAMAP-Rule" id="MF_01544"/>
    </source>
</evidence>
<proteinExistence type="inferred from homology"/>
<accession>A7FDT5</accession>
<feature type="chain" id="PRO_1000185277" description="p-hydroxybenzoic acid efflux pump subunit AaeA">
    <location>
        <begin position="1"/>
        <end position="311"/>
    </location>
</feature>
<feature type="transmembrane region" description="Helical" evidence="1">
    <location>
        <begin position="11"/>
        <end position="31"/>
    </location>
</feature>
<keyword id="KW-0997">Cell inner membrane</keyword>
<keyword id="KW-1003">Cell membrane</keyword>
<keyword id="KW-0472">Membrane</keyword>
<keyword id="KW-0812">Transmembrane</keyword>
<keyword id="KW-1133">Transmembrane helix</keyword>
<keyword id="KW-0813">Transport</keyword>
<sequence length="311" mass="34375">MSTFSLKIIRVGITVLVVVLAVIAIFNVWAFYTESPWTRDAKFTADVVAIAPDVSGLLTEVPVKDNQLVQKGQILFVIDQPRYQQALAEAEADVAYYQTLAAEKQREFSRRHLLGIQALSQEEIDQASNVLQTVQHQLAKTIAVRNLARLDLERTTIRAPAEGWVTNLNVHAGEFINRGATAVALVKKDTFYILAYLEETKLEGVKPGYRAEITPLGSNRILHGTVDSISAGVTNSSSSADSKGLATIDNNLEWVRLAQRVPVKIHLDSEDQQYLYPAGTTATVVITGPNDRDPHQASPMTKLMHRLREFG</sequence>
<organism>
    <name type="scientific">Yersinia pseudotuberculosis serotype O:1b (strain IP 31758)</name>
    <dbReference type="NCBI Taxonomy" id="349747"/>
    <lineage>
        <taxon>Bacteria</taxon>
        <taxon>Pseudomonadati</taxon>
        <taxon>Pseudomonadota</taxon>
        <taxon>Gammaproteobacteria</taxon>
        <taxon>Enterobacterales</taxon>
        <taxon>Yersiniaceae</taxon>
        <taxon>Yersinia</taxon>
    </lineage>
</organism>
<protein>
    <recommendedName>
        <fullName evidence="1">p-hydroxybenzoic acid efflux pump subunit AaeA</fullName>
        <shortName evidence="1">pHBA efflux pump protein A</shortName>
    </recommendedName>
</protein>
<dbReference type="EMBL" id="CP000720">
    <property type="protein sequence ID" value="ABS46593.1"/>
    <property type="molecule type" value="Genomic_DNA"/>
</dbReference>
<dbReference type="RefSeq" id="WP_012104410.1">
    <property type="nucleotide sequence ID" value="NC_009708.1"/>
</dbReference>
<dbReference type="SMR" id="A7FDT5"/>
<dbReference type="KEGG" id="ypi:YpsIP31758_0420"/>
<dbReference type="HOGENOM" id="CLU_018816_15_2_6"/>
<dbReference type="Proteomes" id="UP000002412">
    <property type="component" value="Chromosome"/>
</dbReference>
<dbReference type="GO" id="GO:0005886">
    <property type="term" value="C:plasma membrane"/>
    <property type="evidence" value="ECO:0007669"/>
    <property type="project" value="UniProtKB-SubCell"/>
</dbReference>
<dbReference type="GO" id="GO:0022857">
    <property type="term" value="F:transmembrane transporter activity"/>
    <property type="evidence" value="ECO:0007669"/>
    <property type="project" value="UniProtKB-UniRule"/>
</dbReference>
<dbReference type="Gene3D" id="2.40.30.170">
    <property type="match status" value="1"/>
</dbReference>
<dbReference type="Gene3D" id="2.40.50.100">
    <property type="match status" value="1"/>
</dbReference>
<dbReference type="HAMAP" id="MF_01544">
    <property type="entry name" value="AaeA"/>
    <property type="match status" value="1"/>
</dbReference>
<dbReference type="InterPro" id="IPR043602">
    <property type="entry name" value="CusB-like_dom_1"/>
</dbReference>
<dbReference type="InterPro" id="IPR032317">
    <property type="entry name" value="CusB_D23"/>
</dbReference>
<dbReference type="InterPro" id="IPR050393">
    <property type="entry name" value="MFP_Efflux_Pump"/>
</dbReference>
<dbReference type="InterPro" id="IPR022871">
    <property type="entry name" value="PHBA_efflux_pump_AaeA"/>
</dbReference>
<dbReference type="InterPro" id="IPR006143">
    <property type="entry name" value="RND_pump_MFP"/>
</dbReference>
<dbReference type="NCBIfam" id="NF007850">
    <property type="entry name" value="PRK10559.1"/>
    <property type="match status" value="1"/>
</dbReference>
<dbReference type="NCBIfam" id="TIGR01730">
    <property type="entry name" value="RND_mfp"/>
    <property type="match status" value="1"/>
</dbReference>
<dbReference type="PANTHER" id="PTHR30367:SF12">
    <property type="entry name" value="P-HYDROXYBENZOIC ACID EFFLUX PUMP SUBUNIT AAEA"/>
    <property type="match status" value="1"/>
</dbReference>
<dbReference type="PANTHER" id="PTHR30367">
    <property type="entry name" value="P-HYDROXYBENZOIC ACID EFFLUX PUMP SUBUNIT AAEA-RELATED"/>
    <property type="match status" value="1"/>
</dbReference>
<dbReference type="Pfam" id="PF00529">
    <property type="entry name" value="CusB_dom_1"/>
    <property type="match status" value="1"/>
</dbReference>
<dbReference type="Pfam" id="PF16576">
    <property type="entry name" value="HlyD_D23"/>
    <property type="match status" value="1"/>
</dbReference>
<dbReference type="SUPFAM" id="SSF111369">
    <property type="entry name" value="HlyD-like secretion proteins"/>
    <property type="match status" value="1"/>
</dbReference>
<comment type="function">
    <text evidence="1">Forms an efflux pump with AaeB.</text>
</comment>
<comment type="subcellular location">
    <subcellularLocation>
        <location evidence="1">Cell inner membrane</location>
        <topology evidence="1">Single-pass membrane protein</topology>
    </subcellularLocation>
</comment>
<comment type="similarity">
    <text evidence="1">Belongs to the membrane fusion protein (MFP) (TC 8.A.1) family.</text>
</comment>
<reference key="1">
    <citation type="journal article" date="2007" name="PLoS Genet.">
        <title>The complete genome sequence of Yersinia pseudotuberculosis IP31758, the causative agent of Far East scarlet-like fever.</title>
        <authorList>
            <person name="Eppinger M."/>
            <person name="Rosovitz M.J."/>
            <person name="Fricke W.F."/>
            <person name="Rasko D.A."/>
            <person name="Kokorina G."/>
            <person name="Fayolle C."/>
            <person name="Lindler L.E."/>
            <person name="Carniel E."/>
            <person name="Ravel J."/>
        </authorList>
    </citation>
    <scope>NUCLEOTIDE SEQUENCE [LARGE SCALE GENOMIC DNA]</scope>
    <source>
        <strain>IP 31758</strain>
    </source>
</reference>
<name>AAEA_YERP3</name>
<gene>
    <name evidence="1" type="primary">aaeA</name>
    <name type="ordered locus">YpsIP31758_0420</name>
</gene>